<proteinExistence type="predicted"/>
<comment type="subcellular location">
    <subcellularLocation>
        <location evidence="2">Membrane</location>
        <topology evidence="2">Multi-pass membrane protein</topology>
    </subcellularLocation>
</comment>
<dbReference type="EMBL" id="AAFI02000201">
    <property type="protein sequence ID" value="EAL60776.1"/>
    <property type="molecule type" value="Genomic_DNA"/>
</dbReference>
<dbReference type="RefSeq" id="XP_629188.1">
    <property type="nucleotide sequence ID" value="XM_629186.1"/>
</dbReference>
<dbReference type="FunCoup" id="Q54C03">
    <property type="interactions" value="131"/>
</dbReference>
<dbReference type="PaxDb" id="44689-DDB0191865"/>
<dbReference type="EnsemblProtists" id="EAL60776">
    <property type="protein sequence ID" value="EAL60776"/>
    <property type="gene ID" value="DDB_G0293304"/>
</dbReference>
<dbReference type="GeneID" id="8629147"/>
<dbReference type="KEGG" id="ddi:DDB_G0293304"/>
<dbReference type="dictyBase" id="DDB_G0293304"/>
<dbReference type="VEuPathDB" id="AmoebaDB:DDB_G0293304"/>
<dbReference type="eggNOG" id="ENOG502RIBW">
    <property type="taxonomic scope" value="Eukaryota"/>
</dbReference>
<dbReference type="HOGENOM" id="CLU_1067233_0_0_1"/>
<dbReference type="InParanoid" id="Q54C03"/>
<dbReference type="OMA" id="YNGWIIS"/>
<dbReference type="PRO" id="PR:Q54C03"/>
<dbReference type="Proteomes" id="UP000002195">
    <property type="component" value="Chromosome 6"/>
</dbReference>
<dbReference type="GO" id="GO:0016020">
    <property type="term" value="C:membrane"/>
    <property type="evidence" value="ECO:0007669"/>
    <property type="project" value="UniProtKB-SubCell"/>
</dbReference>
<feature type="chain" id="PRO_0000344393" description="Uncharacterized transmembrane protein DDB_G0293304">
    <location>
        <begin position="1"/>
        <end position="261"/>
    </location>
</feature>
<feature type="transmembrane region" description="Helical" evidence="1">
    <location>
        <begin position="38"/>
        <end position="58"/>
    </location>
</feature>
<feature type="transmembrane region" description="Helical" evidence="1">
    <location>
        <begin position="134"/>
        <end position="154"/>
    </location>
</feature>
<feature type="transmembrane region" description="Helical" evidence="1">
    <location>
        <begin position="163"/>
        <end position="183"/>
    </location>
</feature>
<feature type="transmembrane region" description="Helical" evidence="1">
    <location>
        <begin position="195"/>
        <end position="215"/>
    </location>
</feature>
<feature type="transmembrane region" description="Helical" evidence="1">
    <location>
        <begin position="219"/>
        <end position="239"/>
    </location>
</feature>
<sequence>MVETKPKPTEVQKKKTLYEVMFKSREFIIDVYLRFDCFIYLILGGFGFYQPSNLITLLNYSKSDLGLFNNTDSSISNNNNNNNNINTEEQYSTYDNNLLDNQNEFQIDNNNNNNNNEFIPLYQNPILISVVTMYTLMVSLVAIFQCLISLLALIQKEKSTKSILINLSLTLNFFLLLFNTYVLSTQSEIFSKFAYMGLIVSYIISLLDFSALFFLTSKHKSVLSVISSIFSFFLMCLKVRPKLPKLPKLNSNNNNGNKKKK</sequence>
<keyword id="KW-0472">Membrane</keyword>
<keyword id="KW-1185">Reference proteome</keyword>
<keyword id="KW-0812">Transmembrane</keyword>
<keyword id="KW-1133">Transmembrane helix</keyword>
<organism>
    <name type="scientific">Dictyostelium discoideum</name>
    <name type="common">Social amoeba</name>
    <dbReference type="NCBI Taxonomy" id="44689"/>
    <lineage>
        <taxon>Eukaryota</taxon>
        <taxon>Amoebozoa</taxon>
        <taxon>Evosea</taxon>
        <taxon>Eumycetozoa</taxon>
        <taxon>Dictyostelia</taxon>
        <taxon>Dictyosteliales</taxon>
        <taxon>Dictyosteliaceae</taxon>
        <taxon>Dictyostelium</taxon>
    </lineage>
</organism>
<name>Y1865_DICDI</name>
<accession>Q54C03</accession>
<protein>
    <recommendedName>
        <fullName>Uncharacterized transmembrane protein DDB_G0293304</fullName>
    </recommendedName>
</protein>
<gene>
    <name type="ORF">DDB_G0293304</name>
</gene>
<evidence type="ECO:0000255" key="1"/>
<evidence type="ECO:0000305" key="2"/>
<reference key="1">
    <citation type="journal article" date="2005" name="Nature">
        <title>The genome of the social amoeba Dictyostelium discoideum.</title>
        <authorList>
            <person name="Eichinger L."/>
            <person name="Pachebat J.A."/>
            <person name="Gloeckner G."/>
            <person name="Rajandream M.A."/>
            <person name="Sucgang R."/>
            <person name="Berriman M."/>
            <person name="Song J."/>
            <person name="Olsen R."/>
            <person name="Szafranski K."/>
            <person name="Xu Q."/>
            <person name="Tunggal B."/>
            <person name="Kummerfeld S."/>
            <person name="Madera M."/>
            <person name="Konfortov B.A."/>
            <person name="Rivero F."/>
            <person name="Bankier A.T."/>
            <person name="Lehmann R."/>
            <person name="Hamlin N."/>
            <person name="Davies R."/>
            <person name="Gaudet P."/>
            <person name="Fey P."/>
            <person name="Pilcher K."/>
            <person name="Chen G."/>
            <person name="Saunders D."/>
            <person name="Sodergren E.J."/>
            <person name="Davis P."/>
            <person name="Kerhornou A."/>
            <person name="Nie X."/>
            <person name="Hall N."/>
            <person name="Anjard C."/>
            <person name="Hemphill L."/>
            <person name="Bason N."/>
            <person name="Farbrother P."/>
            <person name="Desany B."/>
            <person name="Just E."/>
            <person name="Morio T."/>
            <person name="Rost R."/>
            <person name="Churcher C.M."/>
            <person name="Cooper J."/>
            <person name="Haydock S."/>
            <person name="van Driessche N."/>
            <person name="Cronin A."/>
            <person name="Goodhead I."/>
            <person name="Muzny D.M."/>
            <person name="Mourier T."/>
            <person name="Pain A."/>
            <person name="Lu M."/>
            <person name="Harper D."/>
            <person name="Lindsay R."/>
            <person name="Hauser H."/>
            <person name="James K.D."/>
            <person name="Quiles M."/>
            <person name="Madan Babu M."/>
            <person name="Saito T."/>
            <person name="Buchrieser C."/>
            <person name="Wardroper A."/>
            <person name="Felder M."/>
            <person name="Thangavelu M."/>
            <person name="Johnson D."/>
            <person name="Knights A."/>
            <person name="Loulseged H."/>
            <person name="Mungall K.L."/>
            <person name="Oliver K."/>
            <person name="Price C."/>
            <person name="Quail M.A."/>
            <person name="Urushihara H."/>
            <person name="Hernandez J."/>
            <person name="Rabbinowitsch E."/>
            <person name="Steffen D."/>
            <person name="Sanders M."/>
            <person name="Ma J."/>
            <person name="Kohara Y."/>
            <person name="Sharp S."/>
            <person name="Simmonds M.N."/>
            <person name="Spiegler S."/>
            <person name="Tivey A."/>
            <person name="Sugano S."/>
            <person name="White B."/>
            <person name="Walker D."/>
            <person name="Woodward J.R."/>
            <person name="Winckler T."/>
            <person name="Tanaka Y."/>
            <person name="Shaulsky G."/>
            <person name="Schleicher M."/>
            <person name="Weinstock G.M."/>
            <person name="Rosenthal A."/>
            <person name="Cox E.C."/>
            <person name="Chisholm R.L."/>
            <person name="Gibbs R.A."/>
            <person name="Loomis W.F."/>
            <person name="Platzer M."/>
            <person name="Kay R.R."/>
            <person name="Williams J.G."/>
            <person name="Dear P.H."/>
            <person name="Noegel A.A."/>
            <person name="Barrell B.G."/>
            <person name="Kuspa A."/>
        </authorList>
    </citation>
    <scope>NUCLEOTIDE SEQUENCE [LARGE SCALE GENOMIC DNA]</scope>
    <source>
        <strain>AX4</strain>
    </source>
</reference>